<reference key="1">
    <citation type="submission" date="2004-11" db="EMBL/GenBank/DDBJ databases">
        <authorList>
            <consortium name="The German cDNA consortium"/>
        </authorList>
    </citation>
    <scope>NUCLEOTIDE SEQUENCE [LARGE SCALE MRNA]</scope>
    <source>
        <tissue>Brain cortex</tissue>
    </source>
</reference>
<name>SNX2_PONAB</name>
<evidence type="ECO:0000250" key="1">
    <source>
        <dbReference type="UniProtKB" id="O60749"/>
    </source>
</evidence>
<evidence type="ECO:0000250" key="2">
    <source>
        <dbReference type="UniProtKB" id="Q13596"/>
    </source>
</evidence>
<evidence type="ECO:0000250" key="3">
    <source>
        <dbReference type="UniProtKB" id="Q96L94"/>
    </source>
</evidence>
<evidence type="ECO:0000250" key="4">
    <source>
        <dbReference type="UniProtKB" id="Q9CWK8"/>
    </source>
</evidence>
<evidence type="ECO:0000255" key="5">
    <source>
        <dbReference type="PROSITE-ProRule" id="PRU00147"/>
    </source>
</evidence>
<evidence type="ECO:0000256" key="6">
    <source>
        <dbReference type="SAM" id="MobiDB-lite"/>
    </source>
</evidence>
<evidence type="ECO:0000305" key="7"/>
<feature type="chain" id="PRO_0000236195" description="Sorting nexin-2">
    <location>
        <begin position="1"/>
        <end position="523"/>
    </location>
</feature>
<feature type="domain" description="PX" evidence="5">
    <location>
        <begin position="140"/>
        <end position="269"/>
    </location>
</feature>
<feature type="domain" description="BAR" evidence="2">
    <location>
        <begin position="299"/>
        <end position="523"/>
    </location>
</feature>
<feature type="region of interest" description="Disordered" evidence="6">
    <location>
        <begin position="1"/>
        <end position="104"/>
    </location>
</feature>
<feature type="region of interest" description="Interaction with RhoG" evidence="1">
    <location>
        <begin position="260"/>
        <end position="523"/>
    </location>
</feature>
<feature type="region of interest" description="Membrane-binding amphipathic helix" evidence="1">
    <location>
        <begin position="278"/>
        <end position="295"/>
    </location>
</feature>
<feature type="compositionally biased region" description="Low complexity" evidence="6">
    <location>
        <begin position="27"/>
        <end position="48"/>
    </location>
</feature>
<feature type="compositionally biased region" description="Low complexity" evidence="6">
    <location>
        <begin position="93"/>
        <end position="104"/>
    </location>
</feature>
<feature type="binding site" evidence="3">
    <location>
        <position position="183"/>
    </location>
    <ligand>
        <name>a 1,2-diacyl-sn-glycero-3-phospho-(1D-myo-inositol-3-phosphate)</name>
        <dbReference type="ChEBI" id="CHEBI:58088"/>
    </ligand>
</feature>
<feature type="binding site" evidence="3">
    <location>
        <position position="185"/>
    </location>
    <ligand>
        <name>a 1,2-diacyl-sn-glycero-3-phospho-(1D-myo-inositol-3-phosphate)</name>
        <dbReference type="ChEBI" id="CHEBI:58088"/>
    </ligand>
</feature>
<feature type="binding site" evidence="3">
    <location>
        <position position="211"/>
    </location>
    <ligand>
        <name>a 1,2-diacyl-sn-glycero-3-phospho-(1D-myo-inositol-3-phosphate)</name>
        <dbReference type="ChEBI" id="CHEBI:58088"/>
    </ligand>
</feature>
<feature type="binding site" evidence="3">
    <location>
        <position position="235"/>
    </location>
    <ligand>
        <name>a 1,2-diacyl-sn-glycero-3-phospho-(1D-myo-inositol-3-phosphate)</name>
        <dbReference type="ChEBI" id="CHEBI:58088"/>
    </ligand>
</feature>
<feature type="modified residue" description="Phosphoserine" evidence="4">
    <location>
        <position position="97"/>
    </location>
</feature>
<feature type="modified residue" description="Phosphothreonine" evidence="1">
    <location>
        <position position="101"/>
    </location>
</feature>
<feature type="modified residue" description="Phosphothreonine" evidence="1">
    <location>
        <position position="104"/>
    </location>
</feature>
<feature type="modified residue" description="Phosphoserine" evidence="1">
    <location>
        <position position="117"/>
    </location>
</feature>
<feature type="modified residue" description="Phosphoserine" evidence="1">
    <location>
        <position position="119"/>
    </location>
</feature>
<feature type="modified residue" description="Phosphoserine" evidence="1">
    <location>
        <position position="185"/>
    </location>
</feature>
<feature type="modified residue" description="Phosphoserine" evidence="1">
    <location>
        <position position="277"/>
    </location>
</feature>
<feature type="modified residue" description="N6-acetyllysine" evidence="1">
    <location>
        <position position="473"/>
    </location>
</feature>
<dbReference type="EMBL" id="CR859480">
    <property type="protein sequence ID" value="CAH91651.1"/>
    <property type="molecule type" value="mRNA"/>
</dbReference>
<dbReference type="RefSeq" id="NP_001125970.1">
    <property type="nucleotide sequence ID" value="NM_001132498.1"/>
</dbReference>
<dbReference type="SMR" id="Q5R9A9"/>
<dbReference type="FunCoup" id="Q5R9A9">
    <property type="interactions" value="3193"/>
</dbReference>
<dbReference type="STRING" id="9601.ENSPPYP00000024698"/>
<dbReference type="Ensembl" id="ENSPPYT00000018288.2">
    <property type="protein sequence ID" value="ENSPPYP00000017579.2"/>
    <property type="gene ID" value="ENSPPYG00000015718.3"/>
</dbReference>
<dbReference type="GeneID" id="100172906"/>
<dbReference type="KEGG" id="pon:100172906"/>
<dbReference type="CTD" id="6643"/>
<dbReference type="eggNOG" id="KOG2273">
    <property type="taxonomic scope" value="Eukaryota"/>
</dbReference>
<dbReference type="GeneTree" id="ENSGT00940000155798"/>
<dbReference type="HOGENOM" id="CLU_022783_2_1_1"/>
<dbReference type="InParanoid" id="Q5R9A9"/>
<dbReference type="OMA" id="LWETFLM"/>
<dbReference type="OrthoDB" id="271164at2759"/>
<dbReference type="TreeFam" id="TF313698"/>
<dbReference type="Proteomes" id="UP000001595">
    <property type="component" value="Chromosome 5"/>
</dbReference>
<dbReference type="GO" id="GO:0005829">
    <property type="term" value="C:cytosol"/>
    <property type="evidence" value="ECO:0007669"/>
    <property type="project" value="GOC"/>
</dbReference>
<dbReference type="GO" id="GO:0031901">
    <property type="term" value="C:early endosome membrane"/>
    <property type="evidence" value="ECO:0007669"/>
    <property type="project" value="UniProtKB-SubCell"/>
</dbReference>
<dbReference type="GO" id="GO:0010008">
    <property type="term" value="C:endosome membrane"/>
    <property type="evidence" value="ECO:0000250"/>
    <property type="project" value="UniProtKB"/>
</dbReference>
<dbReference type="GO" id="GO:0030027">
    <property type="term" value="C:lamellipodium"/>
    <property type="evidence" value="ECO:0007669"/>
    <property type="project" value="UniProtKB-SubCell"/>
</dbReference>
<dbReference type="GO" id="GO:0005764">
    <property type="term" value="C:lysosome"/>
    <property type="evidence" value="ECO:0007669"/>
    <property type="project" value="Ensembl"/>
</dbReference>
<dbReference type="GO" id="GO:0030905">
    <property type="term" value="C:retromer, tubulation complex"/>
    <property type="evidence" value="ECO:0007669"/>
    <property type="project" value="Ensembl"/>
</dbReference>
<dbReference type="GO" id="GO:0005154">
    <property type="term" value="F:epidermal growth factor receptor binding"/>
    <property type="evidence" value="ECO:0007669"/>
    <property type="project" value="Ensembl"/>
</dbReference>
<dbReference type="GO" id="GO:0005158">
    <property type="term" value="F:insulin receptor binding"/>
    <property type="evidence" value="ECO:0007669"/>
    <property type="project" value="Ensembl"/>
</dbReference>
<dbReference type="GO" id="GO:1990460">
    <property type="term" value="F:leptin receptor binding"/>
    <property type="evidence" value="ECO:0007669"/>
    <property type="project" value="Ensembl"/>
</dbReference>
<dbReference type="GO" id="GO:0035091">
    <property type="term" value="F:phosphatidylinositol binding"/>
    <property type="evidence" value="ECO:0007669"/>
    <property type="project" value="InterPro"/>
</dbReference>
<dbReference type="GO" id="GO:0046982">
    <property type="term" value="F:protein heterodimerization activity"/>
    <property type="evidence" value="ECO:0007669"/>
    <property type="project" value="Ensembl"/>
</dbReference>
<dbReference type="GO" id="GO:0042803">
    <property type="term" value="F:protein homodimerization activity"/>
    <property type="evidence" value="ECO:0007669"/>
    <property type="project" value="Ensembl"/>
</dbReference>
<dbReference type="GO" id="GO:1990459">
    <property type="term" value="F:transferrin receptor binding"/>
    <property type="evidence" value="ECO:0007669"/>
    <property type="project" value="Ensembl"/>
</dbReference>
<dbReference type="GO" id="GO:0034498">
    <property type="term" value="P:early endosome to Golgi transport"/>
    <property type="evidence" value="ECO:0007669"/>
    <property type="project" value="TreeGrafter"/>
</dbReference>
<dbReference type="GO" id="GO:0006886">
    <property type="term" value="P:intracellular protein transport"/>
    <property type="evidence" value="ECO:0007669"/>
    <property type="project" value="InterPro"/>
</dbReference>
<dbReference type="GO" id="GO:0072673">
    <property type="term" value="P:lamellipodium morphogenesis"/>
    <property type="evidence" value="ECO:0000250"/>
    <property type="project" value="UniProtKB"/>
</dbReference>
<dbReference type="GO" id="GO:0042147">
    <property type="term" value="P:retrograde transport, endosome to Golgi"/>
    <property type="evidence" value="ECO:0000250"/>
    <property type="project" value="UniProtKB"/>
</dbReference>
<dbReference type="CDD" id="cd07282">
    <property type="entry name" value="PX_SNX2"/>
    <property type="match status" value="1"/>
</dbReference>
<dbReference type="FunFam" id="1.20.1270.60:FF:000012">
    <property type="entry name" value="Sorting nexin 2"/>
    <property type="match status" value="1"/>
</dbReference>
<dbReference type="FunFam" id="3.30.1520.10:FF:000016">
    <property type="entry name" value="Sorting nexin 2"/>
    <property type="match status" value="1"/>
</dbReference>
<dbReference type="Gene3D" id="1.20.1270.60">
    <property type="entry name" value="Arfaptin homology (AH) domain/BAR domain"/>
    <property type="match status" value="1"/>
</dbReference>
<dbReference type="Gene3D" id="3.30.1520.10">
    <property type="entry name" value="Phox-like domain"/>
    <property type="match status" value="1"/>
</dbReference>
<dbReference type="InterPro" id="IPR027267">
    <property type="entry name" value="AH/BAR_dom_sf"/>
</dbReference>
<dbReference type="InterPro" id="IPR001683">
    <property type="entry name" value="PX_dom"/>
</dbReference>
<dbReference type="InterPro" id="IPR036871">
    <property type="entry name" value="PX_dom_sf"/>
</dbReference>
<dbReference type="InterPro" id="IPR037918">
    <property type="entry name" value="SNX2_PX"/>
</dbReference>
<dbReference type="InterPro" id="IPR005329">
    <property type="entry name" value="Sorting_nexin_N"/>
</dbReference>
<dbReference type="InterPro" id="IPR015404">
    <property type="entry name" value="Vps5_C"/>
</dbReference>
<dbReference type="PANTHER" id="PTHR10555">
    <property type="entry name" value="SORTING NEXIN"/>
    <property type="match status" value="1"/>
</dbReference>
<dbReference type="PANTHER" id="PTHR10555:SF31">
    <property type="entry name" value="SORTING NEXIN-2"/>
    <property type="match status" value="1"/>
</dbReference>
<dbReference type="Pfam" id="PF00787">
    <property type="entry name" value="PX"/>
    <property type="match status" value="1"/>
</dbReference>
<dbReference type="Pfam" id="PF03700">
    <property type="entry name" value="Sorting_nexin"/>
    <property type="match status" value="1"/>
</dbReference>
<dbReference type="Pfam" id="PF09325">
    <property type="entry name" value="Vps5"/>
    <property type="match status" value="1"/>
</dbReference>
<dbReference type="SMART" id="SM00312">
    <property type="entry name" value="PX"/>
    <property type="match status" value="1"/>
</dbReference>
<dbReference type="SUPFAM" id="SSF103657">
    <property type="entry name" value="BAR/IMD domain-like"/>
    <property type="match status" value="1"/>
</dbReference>
<dbReference type="SUPFAM" id="SSF64268">
    <property type="entry name" value="PX domain"/>
    <property type="match status" value="1"/>
</dbReference>
<dbReference type="PROSITE" id="PS50195">
    <property type="entry name" value="PX"/>
    <property type="match status" value="1"/>
</dbReference>
<keyword id="KW-0007">Acetylation</keyword>
<keyword id="KW-0966">Cell projection</keyword>
<keyword id="KW-0967">Endosome</keyword>
<keyword id="KW-0446">Lipid-binding</keyword>
<keyword id="KW-0472">Membrane</keyword>
<keyword id="KW-0597">Phosphoprotein</keyword>
<keyword id="KW-0653">Protein transport</keyword>
<keyword id="KW-1185">Reference proteome</keyword>
<keyword id="KW-0813">Transport</keyword>
<sequence length="523" mass="58974">MAAEREPPPLGDGKPTDFEDLEDGEDLFTSTVSTLESSPSSPEPTSLPAEDISANSNGPKPTEVVLDDDREDLFAEATEEVSLDSPEREPILSSEPSPAVTPVTPTTLIAPRIESKSMSAPVIFDRSREEIEEEANGDIFDIEIGVSDPEKVGDGMNAYMAYRVTTKTSLSMFSKSEFSVKRRFSDFLGLHSKLASKYLHVGYIVPPAPEKSIVGMTKVKVGKEDSSSTEFVEKRRAALERYLQRTVKHPTLLQDPDLRQFLESSELPRAVNTQALSGAGILRMVNKAADAVNKMTIKMNESDAWFEEKQQQFENLDQQLRKLHASVEALVCHRKELSANTAAFAKSAAMLGNSEDHTALSRALSQLAEVEEKIDQLHQEQAFADFYMFSELLSDYIRLIAAVKGVFDHRMKCWQKWEDAQITLLKKREAEAKMMVANKPDKIQQAKNEIREEIEEWEAKVQQGERDFEQISKTIRKEVGRFEKERVKDFKTVIIKYLESLVQTQQQLIKYWEAFLPEAKAIA</sequence>
<organism>
    <name type="scientific">Pongo abelii</name>
    <name type="common">Sumatran orangutan</name>
    <name type="synonym">Pongo pygmaeus abelii</name>
    <dbReference type="NCBI Taxonomy" id="9601"/>
    <lineage>
        <taxon>Eukaryota</taxon>
        <taxon>Metazoa</taxon>
        <taxon>Chordata</taxon>
        <taxon>Craniata</taxon>
        <taxon>Vertebrata</taxon>
        <taxon>Euteleostomi</taxon>
        <taxon>Mammalia</taxon>
        <taxon>Eutheria</taxon>
        <taxon>Euarchontoglires</taxon>
        <taxon>Primates</taxon>
        <taxon>Haplorrhini</taxon>
        <taxon>Catarrhini</taxon>
        <taxon>Hominidae</taxon>
        <taxon>Pongo</taxon>
    </lineage>
</organism>
<gene>
    <name type="primary">SNX2</name>
</gene>
<proteinExistence type="evidence at transcript level"/>
<accession>Q5R9A9</accession>
<protein>
    <recommendedName>
        <fullName>Sorting nexin-2</fullName>
    </recommendedName>
</protein>
<comment type="function">
    <text evidence="1">Involved in several stages of intracellular trafficking. Interacts with membranes containing phosphatidylinositol 3-phosphate (PtdIns(3P)) or phosphatidylinositol 3,5-bisphosphate (PtdIns(3,5)P2). Acts in part as component of the retromer membrane-deforming SNX-BAR subcomplex. The SNX-BAR retromer mediates retrograde transport of cargo proteins from endosomes to the trans-Golgi network (TGN) and is involved in endosome-to-plasma membrane transport for cargo protein recycling. The SNX-BAR subcomplex functions to deform the donor membrane into a tubular profile called endosome-to-TGN transport carrier (ETC). Can sense membrane curvature and has in vitro vesicle-to-membrane remodeling activity. Required for retrograde endosome-to-TGN transport of TGN38. Promotes KALRN- and RHOG-dependent but retromer-independent membrane remodeling such as lamellipodium formation; the function is dependent on GEF activity of KALRN (By similarity).</text>
</comment>
<comment type="subunit">
    <text evidence="1">Predominantly forms heterodimers with BAR domain-containing sorting nexins SNX5, SNX6 and SNX32; can self-associate to form homodimers. The heterodimers are proposed to self-assemble into helical arrays on the membrane to stabilize and expand local membrane curvature underlying endosomal tubule formation. Thought to be a component of the originally described retromer complex (also called SNX-BAR retromer) which is a pentamer containing the heterotrimeric retromer cargo-selective complex (CSC), also described as vacuolar protein sorting subcomplex (VPS), and a heterodimeric membrane-deforming subcomplex formed between SNX1 or SNX2 and SNX5 or SNX6 (also called SNX-BAR subcomplex); the respective CSC and SNX-BAR subcomplexes associate with low affinity. Interacts with SNX5, SNX6, SNX32, VPS26A, VPS29, VPS35, FNBP1, KALRN, RHOG (GDP-bound form) (By similarity).</text>
</comment>
<comment type="subcellular location">
    <subcellularLocation>
        <location>Early endosome membrane</location>
        <topology>Peripheral membrane protein</topology>
        <orientation evidence="1">Cytoplasmic side</orientation>
    </subcellularLocation>
    <subcellularLocation>
        <location>Cell projection</location>
        <location>Lamellipodium</location>
    </subcellularLocation>
    <text evidence="1">Colocalized with SORT1 to tubular endosomal membrane structures called endosome-to-TGN transport carriers (ETCs) which are budding from early endosome vacuoles just before maturing into late endosome vacuoles. Colocalized with F-actin at the leading edge of lamellipodia in cells in a KALRN-dependent manner (By similarity).</text>
</comment>
<comment type="domain">
    <text evidence="1">The BAR domain is able to sense membrane curvature upon dimerization. Membrane remodeling seems to implicate insertion of a N-terminal amphipathic helix (AH) in the membrane (By similarity).</text>
</comment>
<comment type="similarity">
    <text evidence="7">Belongs to the sorting nexin family.</text>
</comment>